<feature type="chain" id="PRO_0000244908" description="NADH-quinone oxidoreductase subunit H">
    <location>
        <begin position="1"/>
        <end position="355"/>
    </location>
</feature>
<feature type="transmembrane region" description="Helical" evidence="1">
    <location>
        <begin position="25"/>
        <end position="45"/>
    </location>
</feature>
<feature type="transmembrane region" description="Helical" evidence="1">
    <location>
        <begin position="91"/>
        <end position="111"/>
    </location>
</feature>
<feature type="transmembrane region" description="Helical" evidence="1">
    <location>
        <begin position="126"/>
        <end position="146"/>
    </location>
</feature>
<feature type="transmembrane region" description="Helical" evidence="1">
    <location>
        <begin position="170"/>
        <end position="190"/>
    </location>
</feature>
<feature type="transmembrane region" description="Helical" evidence="1">
    <location>
        <begin position="205"/>
        <end position="225"/>
    </location>
</feature>
<feature type="transmembrane region" description="Helical" evidence="1">
    <location>
        <begin position="252"/>
        <end position="272"/>
    </location>
</feature>
<feature type="transmembrane region" description="Helical" evidence="1">
    <location>
        <begin position="290"/>
        <end position="310"/>
    </location>
</feature>
<feature type="transmembrane region" description="Helical" evidence="1">
    <location>
        <begin position="330"/>
        <end position="350"/>
    </location>
</feature>
<sequence length="355" mass="39303">MSLFDTINAGGSQLLGFAWPTVWAIVRILVVSVVILLCVAYLILWERKLIGWMHVRLGPNRVGPGGLLQPIADVLKLLLKEVIQPSAASRWLYLIAPVMTVVPAFAVWAVIPFQAEAVLANVNAGLLYAMAISSIGVYAVILAGWASNSKYAFLGAMRAAAQMVSYEISMGFALVLVLMTAGSLNLSEIVGSQQHGFFAGHGVNFLSWNWLPLLPAFVVYFISGIAETNRHPFDVVEGESEIVAGHMIDYSGMAFALFFLAEYINMIVISALTATLFLGGWDAPFEFLSFIPGIFWLVLKIFALLSVFIWVRATFPRFRYDQIMRLGWKVFLPVTVVWVVVVGFWMMSPLNIWVK</sequence>
<organism>
    <name type="scientific">Burkholderia lata (strain ATCC 17760 / DSM 23089 / LMG 22485 / NCIMB 9086 / R18194 / 383)</name>
    <dbReference type="NCBI Taxonomy" id="482957"/>
    <lineage>
        <taxon>Bacteria</taxon>
        <taxon>Pseudomonadati</taxon>
        <taxon>Pseudomonadota</taxon>
        <taxon>Betaproteobacteria</taxon>
        <taxon>Burkholderiales</taxon>
        <taxon>Burkholderiaceae</taxon>
        <taxon>Burkholderia</taxon>
        <taxon>Burkholderia cepacia complex</taxon>
    </lineage>
</organism>
<comment type="function">
    <text evidence="1">NDH-1 shuttles electrons from NADH, via FMN and iron-sulfur (Fe-S) centers, to quinones in the respiratory chain. The immediate electron acceptor for the enzyme in this species is believed to be ubiquinone. Couples the redox reaction to proton translocation (for every two electrons transferred, four hydrogen ions are translocated across the cytoplasmic membrane), and thus conserves the redox energy in a proton gradient. This subunit may bind ubiquinone.</text>
</comment>
<comment type="catalytic activity">
    <reaction evidence="1">
        <text>a quinone + NADH + 5 H(+)(in) = a quinol + NAD(+) + 4 H(+)(out)</text>
        <dbReference type="Rhea" id="RHEA:57888"/>
        <dbReference type="ChEBI" id="CHEBI:15378"/>
        <dbReference type="ChEBI" id="CHEBI:24646"/>
        <dbReference type="ChEBI" id="CHEBI:57540"/>
        <dbReference type="ChEBI" id="CHEBI:57945"/>
        <dbReference type="ChEBI" id="CHEBI:132124"/>
    </reaction>
</comment>
<comment type="subunit">
    <text evidence="1">NDH-1 is composed of 14 different subunits. Subunits NuoA, H, J, K, L, M, N constitute the membrane sector of the complex.</text>
</comment>
<comment type="subcellular location">
    <subcellularLocation>
        <location evidence="1">Cell inner membrane</location>
        <topology evidence="1">Multi-pass membrane protein</topology>
    </subcellularLocation>
</comment>
<comment type="similarity">
    <text evidence="1">Belongs to the complex I subunit 1 family.</text>
</comment>
<name>NUOH_BURL3</name>
<dbReference type="EC" id="7.1.1.-" evidence="1"/>
<dbReference type="EMBL" id="CP000151">
    <property type="protein sequence ID" value="ABB09164.1"/>
    <property type="molecule type" value="Genomic_DNA"/>
</dbReference>
<dbReference type="RefSeq" id="WP_011352696.1">
    <property type="nucleotide sequence ID" value="NZ_WNDV01000048.1"/>
</dbReference>
<dbReference type="SMR" id="Q39EF2"/>
<dbReference type="GeneID" id="93191316"/>
<dbReference type="KEGG" id="bur:Bcep18194_A5570"/>
<dbReference type="HOGENOM" id="CLU_015134_0_1_4"/>
<dbReference type="Proteomes" id="UP000002705">
    <property type="component" value="Chromosome 1"/>
</dbReference>
<dbReference type="GO" id="GO:0005886">
    <property type="term" value="C:plasma membrane"/>
    <property type="evidence" value="ECO:0007669"/>
    <property type="project" value="UniProtKB-SubCell"/>
</dbReference>
<dbReference type="GO" id="GO:0003954">
    <property type="term" value="F:NADH dehydrogenase activity"/>
    <property type="evidence" value="ECO:0007669"/>
    <property type="project" value="TreeGrafter"/>
</dbReference>
<dbReference type="GO" id="GO:0016655">
    <property type="term" value="F:oxidoreductase activity, acting on NAD(P)H, quinone or similar compound as acceptor"/>
    <property type="evidence" value="ECO:0007669"/>
    <property type="project" value="UniProtKB-UniRule"/>
</dbReference>
<dbReference type="GO" id="GO:0048038">
    <property type="term" value="F:quinone binding"/>
    <property type="evidence" value="ECO:0007669"/>
    <property type="project" value="UniProtKB-KW"/>
</dbReference>
<dbReference type="GO" id="GO:0009060">
    <property type="term" value="P:aerobic respiration"/>
    <property type="evidence" value="ECO:0007669"/>
    <property type="project" value="TreeGrafter"/>
</dbReference>
<dbReference type="HAMAP" id="MF_01350">
    <property type="entry name" value="NDH1_NuoH"/>
    <property type="match status" value="1"/>
</dbReference>
<dbReference type="InterPro" id="IPR001694">
    <property type="entry name" value="NADH_UbQ_OxRdtase_su1/FPO"/>
</dbReference>
<dbReference type="InterPro" id="IPR018086">
    <property type="entry name" value="NADH_UbQ_OxRdtase_su1_CS"/>
</dbReference>
<dbReference type="NCBIfam" id="NF004741">
    <property type="entry name" value="PRK06076.1-2"/>
    <property type="match status" value="1"/>
</dbReference>
<dbReference type="NCBIfam" id="NF004742">
    <property type="entry name" value="PRK06076.1-3"/>
    <property type="match status" value="1"/>
</dbReference>
<dbReference type="PANTHER" id="PTHR11432">
    <property type="entry name" value="NADH DEHYDROGENASE SUBUNIT 1"/>
    <property type="match status" value="1"/>
</dbReference>
<dbReference type="PANTHER" id="PTHR11432:SF3">
    <property type="entry name" value="NADH-UBIQUINONE OXIDOREDUCTASE CHAIN 1"/>
    <property type="match status" value="1"/>
</dbReference>
<dbReference type="Pfam" id="PF00146">
    <property type="entry name" value="NADHdh"/>
    <property type="match status" value="1"/>
</dbReference>
<dbReference type="PROSITE" id="PS00668">
    <property type="entry name" value="COMPLEX1_ND1_2"/>
    <property type="match status" value="1"/>
</dbReference>
<proteinExistence type="inferred from homology"/>
<accession>Q39EF2</accession>
<keyword id="KW-0997">Cell inner membrane</keyword>
<keyword id="KW-1003">Cell membrane</keyword>
<keyword id="KW-0472">Membrane</keyword>
<keyword id="KW-0520">NAD</keyword>
<keyword id="KW-0874">Quinone</keyword>
<keyword id="KW-1278">Translocase</keyword>
<keyword id="KW-0812">Transmembrane</keyword>
<keyword id="KW-1133">Transmembrane helix</keyword>
<keyword id="KW-0830">Ubiquinone</keyword>
<reference key="1">
    <citation type="submission" date="2005-10" db="EMBL/GenBank/DDBJ databases">
        <title>Complete sequence of chromosome 1 of Burkholderia sp. 383.</title>
        <authorList>
            <consortium name="US DOE Joint Genome Institute"/>
            <person name="Copeland A."/>
            <person name="Lucas S."/>
            <person name="Lapidus A."/>
            <person name="Barry K."/>
            <person name="Detter J.C."/>
            <person name="Glavina T."/>
            <person name="Hammon N."/>
            <person name="Israni S."/>
            <person name="Pitluck S."/>
            <person name="Chain P."/>
            <person name="Malfatti S."/>
            <person name="Shin M."/>
            <person name="Vergez L."/>
            <person name="Schmutz J."/>
            <person name="Larimer F."/>
            <person name="Land M."/>
            <person name="Kyrpides N."/>
            <person name="Lykidis A."/>
            <person name="Richardson P."/>
        </authorList>
    </citation>
    <scope>NUCLEOTIDE SEQUENCE [LARGE SCALE GENOMIC DNA]</scope>
    <source>
        <strain>ATCC 17760 / DSM 23089 / LMG 22485 / NCIMB 9086 / R18194 / 383</strain>
    </source>
</reference>
<gene>
    <name evidence="1" type="primary">nuoH</name>
    <name type="ordered locus">Bcep18194_A5570</name>
</gene>
<protein>
    <recommendedName>
        <fullName evidence="1">NADH-quinone oxidoreductase subunit H</fullName>
        <ecNumber evidence="1">7.1.1.-</ecNumber>
    </recommendedName>
    <alternativeName>
        <fullName evidence="1">NADH dehydrogenase I subunit H</fullName>
    </alternativeName>
    <alternativeName>
        <fullName evidence="1">NDH-1 subunit H</fullName>
    </alternativeName>
</protein>
<evidence type="ECO:0000255" key="1">
    <source>
        <dbReference type="HAMAP-Rule" id="MF_01350"/>
    </source>
</evidence>